<accession>B8J873</accession>
<protein>
    <recommendedName>
        <fullName evidence="1">Small ribosomal subunit protein uS14</fullName>
    </recommendedName>
    <alternativeName>
        <fullName evidence="2">30S ribosomal protein S14 type Z</fullName>
    </alternativeName>
</protein>
<organism>
    <name type="scientific">Anaeromyxobacter dehalogenans (strain 2CP-1 / ATCC BAA-258)</name>
    <dbReference type="NCBI Taxonomy" id="455488"/>
    <lineage>
        <taxon>Bacteria</taxon>
        <taxon>Pseudomonadati</taxon>
        <taxon>Myxococcota</taxon>
        <taxon>Myxococcia</taxon>
        <taxon>Myxococcales</taxon>
        <taxon>Cystobacterineae</taxon>
        <taxon>Anaeromyxobacteraceae</taxon>
        <taxon>Anaeromyxobacter</taxon>
    </lineage>
</organism>
<sequence length="61" mass="7206">MAKLSKMAQATRKLKFPVRQYNRCPLCGRPRAFLRKFQMCRICFRKRALQGEITGVIKSSW</sequence>
<feature type="chain" id="PRO_1000166753" description="Small ribosomal subunit protein uS14">
    <location>
        <begin position="1"/>
        <end position="61"/>
    </location>
</feature>
<feature type="binding site" evidence="1">
    <location>
        <position position="24"/>
    </location>
    <ligand>
        <name>Zn(2+)</name>
        <dbReference type="ChEBI" id="CHEBI:29105"/>
    </ligand>
</feature>
<feature type="binding site" evidence="1">
    <location>
        <position position="27"/>
    </location>
    <ligand>
        <name>Zn(2+)</name>
        <dbReference type="ChEBI" id="CHEBI:29105"/>
    </ligand>
</feature>
<feature type="binding site" evidence="1">
    <location>
        <position position="40"/>
    </location>
    <ligand>
        <name>Zn(2+)</name>
        <dbReference type="ChEBI" id="CHEBI:29105"/>
    </ligand>
</feature>
<feature type="binding site" evidence="1">
    <location>
        <position position="43"/>
    </location>
    <ligand>
        <name>Zn(2+)</name>
        <dbReference type="ChEBI" id="CHEBI:29105"/>
    </ligand>
</feature>
<evidence type="ECO:0000255" key="1">
    <source>
        <dbReference type="HAMAP-Rule" id="MF_01364"/>
    </source>
</evidence>
<evidence type="ECO:0000305" key="2"/>
<proteinExistence type="inferred from homology"/>
<dbReference type="EMBL" id="CP001359">
    <property type="protein sequence ID" value="ACL65372.1"/>
    <property type="molecule type" value="Genomic_DNA"/>
</dbReference>
<dbReference type="RefSeq" id="WP_011420987.1">
    <property type="nucleotide sequence ID" value="NC_011891.1"/>
</dbReference>
<dbReference type="SMR" id="B8J873"/>
<dbReference type="KEGG" id="acp:A2cp1_2031"/>
<dbReference type="HOGENOM" id="CLU_139869_3_0_7"/>
<dbReference type="Proteomes" id="UP000007089">
    <property type="component" value="Chromosome"/>
</dbReference>
<dbReference type="GO" id="GO:0005737">
    <property type="term" value="C:cytoplasm"/>
    <property type="evidence" value="ECO:0007669"/>
    <property type="project" value="UniProtKB-ARBA"/>
</dbReference>
<dbReference type="GO" id="GO:0015935">
    <property type="term" value="C:small ribosomal subunit"/>
    <property type="evidence" value="ECO:0007669"/>
    <property type="project" value="TreeGrafter"/>
</dbReference>
<dbReference type="GO" id="GO:0019843">
    <property type="term" value="F:rRNA binding"/>
    <property type="evidence" value="ECO:0007669"/>
    <property type="project" value="UniProtKB-UniRule"/>
</dbReference>
<dbReference type="GO" id="GO:0003735">
    <property type="term" value="F:structural constituent of ribosome"/>
    <property type="evidence" value="ECO:0007669"/>
    <property type="project" value="InterPro"/>
</dbReference>
<dbReference type="GO" id="GO:0008270">
    <property type="term" value="F:zinc ion binding"/>
    <property type="evidence" value="ECO:0007669"/>
    <property type="project" value="UniProtKB-UniRule"/>
</dbReference>
<dbReference type="GO" id="GO:0006412">
    <property type="term" value="P:translation"/>
    <property type="evidence" value="ECO:0007669"/>
    <property type="project" value="UniProtKB-UniRule"/>
</dbReference>
<dbReference type="Gene3D" id="4.10.830.10">
    <property type="entry name" value="30s Ribosomal Protein S14, Chain N"/>
    <property type="match status" value="1"/>
</dbReference>
<dbReference type="HAMAP" id="MF_01364_B">
    <property type="entry name" value="Ribosomal_uS14_2_B"/>
    <property type="match status" value="1"/>
</dbReference>
<dbReference type="InterPro" id="IPR001209">
    <property type="entry name" value="Ribosomal_uS14"/>
</dbReference>
<dbReference type="InterPro" id="IPR023053">
    <property type="entry name" value="Ribosomal_uS14_bact"/>
</dbReference>
<dbReference type="InterPro" id="IPR018271">
    <property type="entry name" value="Ribosomal_uS14_CS"/>
</dbReference>
<dbReference type="InterPro" id="IPR043140">
    <property type="entry name" value="Ribosomal_uS14_sf"/>
</dbReference>
<dbReference type="NCBIfam" id="NF005974">
    <property type="entry name" value="PRK08061.1"/>
    <property type="match status" value="1"/>
</dbReference>
<dbReference type="PANTHER" id="PTHR19836">
    <property type="entry name" value="30S RIBOSOMAL PROTEIN S14"/>
    <property type="match status" value="1"/>
</dbReference>
<dbReference type="PANTHER" id="PTHR19836:SF19">
    <property type="entry name" value="SMALL RIBOSOMAL SUBUNIT PROTEIN US14M"/>
    <property type="match status" value="1"/>
</dbReference>
<dbReference type="Pfam" id="PF00253">
    <property type="entry name" value="Ribosomal_S14"/>
    <property type="match status" value="1"/>
</dbReference>
<dbReference type="SUPFAM" id="SSF57716">
    <property type="entry name" value="Glucocorticoid receptor-like (DNA-binding domain)"/>
    <property type="match status" value="1"/>
</dbReference>
<dbReference type="PROSITE" id="PS00527">
    <property type="entry name" value="RIBOSOMAL_S14"/>
    <property type="match status" value="1"/>
</dbReference>
<name>RS14Z_ANAD2</name>
<keyword id="KW-0479">Metal-binding</keyword>
<keyword id="KW-0687">Ribonucleoprotein</keyword>
<keyword id="KW-0689">Ribosomal protein</keyword>
<keyword id="KW-0694">RNA-binding</keyword>
<keyword id="KW-0699">rRNA-binding</keyword>
<keyword id="KW-0862">Zinc</keyword>
<gene>
    <name evidence="1" type="primary">rpsZ</name>
    <name evidence="1" type="synonym">rpsN</name>
    <name type="ordered locus">A2cp1_2031</name>
</gene>
<comment type="function">
    <text evidence="1">Binds 16S rRNA, required for the assembly of 30S particles and may also be responsible for determining the conformation of the 16S rRNA at the A site.</text>
</comment>
<comment type="cofactor">
    <cofactor evidence="1">
        <name>Zn(2+)</name>
        <dbReference type="ChEBI" id="CHEBI:29105"/>
    </cofactor>
    <text evidence="1">Binds 1 zinc ion per subunit.</text>
</comment>
<comment type="subunit">
    <text evidence="1">Part of the 30S ribosomal subunit. Contacts proteins S3 and S10.</text>
</comment>
<comment type="similarity">
    <text evidence="1">Belongs to the universal ribosomal protein uS14 family. Zinc-binding uS14 subfamily.</text>
</comment>
<reference key="1">
    <citation type="submission" date="2009-01" db="EMBL/GenBank/DDBJ databases">
        <title>Complete sequence of Anaeromyxobacter dehalogenans 2CP-1.</title>
        <authorList>
            <person name="Lucas S."/>
            <person name="Copeland A."/>
            <person name="Lapidus A."/>
            <person name="Glavina del Rio T."/>
            <person name="Dalin E."/>
            <person name="Tice H."/>
            <person name="Bruce D."/>
            <person name="Goodwin L."/>
            <person name="Pitluck S."/>
            <person name="Saunders E."/>
            <person name="Brettin T."/>
            <person name="Detter J.C."/>
            <person name="Han C."/>
            <person name="Larimer F."/>
            <person name="Land M."/>
            <person name="Hauser L."/>
            <person name="Kyrpides N."/>
            <person name="Ovchinnikova G."/>
            <person name="Beliaev A.S."/>
            <person name="Richardson P."/>
        </authorList>
    </citation>
    <scope>NUCLEOTIDE SEQUENCE [LARGE SCALE GENOMIC DNA]</scope>
    <source>
        <strain>2CP-1 / ATCC BAA-258</strain>
    </source>
</reference>